<reference key="1">
    <citation type="journal article" date="2008" name="Genomics">
        <title>Characterization of ST-4821 complex, a unique Neisseria meningitidis clone.</title>
        <authorList>
            <person name="Peng J."/>
            <person name="Yang L."/>
            <person name="Yang F."/>
            <person name="Yang J."/>
            <person name="Yan Y."/>
            <person name="Nie H."/>
            <person name="Zhang X."/>
            <person name="Xiong Z."/>
            <person name="Jiang Y."/>
            <person name="Cheng F."/>
            <person name="Xu X."/>
            <person name="Chen S."/>
            <person name="Sun L."/>
            <person name="Li W."/>
            <person name="Shen Y."/>
            <person name="Shao Z."/>
            <person name="Liang X."/>
            <person name="Xu J."/>
            <person name="Jin Q."/>
        </authorList>
    </citation>
    <scope>NUCLEOTIDE SEQUENCE [LARGE SCALE GENOMIC DNA]</scope>
    <source>
        <strain>053442</strain>
    </source>
</reference>
<dbReference type="EC" id="6.3.4.2" evidence="1"/>
<dbReference type="EMBL" id="CP000381">
    <property type="protein sequence ID" value="ABX73621.1"/>
    <property type="molecule type" value="Genomic_DNA"/>
</dbReference>
<dbReference type="RefSeq" id="WP_002244956.1">
    <property type="nucleotide sequence ID" value="NC_010120.1"/>
</dbReference>
<dbReference type="SMR" id="A9M0Y3"/>
<dbReference type="MEROPS" id="C26.964"/>
<dbReference type="KEGG" id="nmn:NMCC_1456"/>
<dbReference type="HOGENOM" id="CLU_011675_5_0_4"/>
<dbReference type="UniPathway" id="UPA00159">
    <property type="reaction ID" value="UER00277"/>
</dbReference>
<dbReference type="Proteomes" id="UP000001177">
    <property type="component" value="Chromosome"/>
</dbReference>
<dbReference type="GO" id="GO:0005829">
    <property type="term" value="C:cytosol"/>
    <property type="evidence" value="ECO:0007669"/>
    <property type="project" value="TreeGrafter"/>
</dbReference>
<dbReference type="GO" id="GO:0005524">
    <property type="term" value="F:ATP binding"/>
    <property type="evidence" value="ECO:0007669"/>
    <property type="project" value="UniProtKB-KW"/>
</dbReference>
<dbReference type="GO" id="GO:0003883">
    <property type="term" value="F:CTP synthase activity"/>
    <property type="evidence" value="ECO:0007669"/>
    <property type="project" value="UniProtKB-UniRule"/>
</dbReference>
<dbReference type="GO" id="GO:0004359">
    <property type="term" value="F:glutaminase activity"/>
    <property type="evidence" value="ECO:0007669"/>
    <property type="project" value="RHEA"/>
</dbReference>
<dbReference type="GO" id="GO:0042802">
    <property type="term" value="F:identical protein binding"/>
    <property type="evidence" value="ECO:0007669"/>
    <property type="project" value="TreeGrafter"/>
</dbReference>
<dbReference type="GO" id="GO:0046872">
    <property type="term" value="F:metal ion binding"/>
    <property type="evidence" value="ECO:0007669"/>
    <property type="project" value="UniProtKB-KW"/>
</dbReference>
<dbReference type="GO" id="GO:0044210">
    <property type="term" value="P:'de novo' CTP biosynthetic process"/>
    <property type="evidence" value="ECO:0007669"/>
    <property type="project" value="UniProtKB-UniRule"/>
</dbReference>
<dbReference type="GO" id="GO:0019856">
    <property type="term" value="P:pyrimidine nucleobase biosynthetic process"/>
    <property type="evidence" value="ECO:0007669"/>
    <property type="project" value="TreeGrafter"/>
</dbReference>
<dbReference type="CDD" id="cd03113">
    <property type="entry name" value="CTPS_N"/>
    <property type="match status" value="1"/>
</dbReference>
<dbReference type="CDD" id="cd01746">
    <property type="entry name" value="GATase1_CTP_Synthase"/>
    <property type="match status" value="1"/>
</dbReference>
<dbReference type="FunFam" id="3.40.50.300:FF:000009">
    <property type="entry name" value="CTP synthase"/>
    <property type="match status" value="1"/>
</dbReference>
<dbReference type="FunFam" id="3.40.50.880:FF:000002">
    <property type="entry name" value="CTP synthase"/>
    <property type="match status" value="1"/>
</dbReference>
<dbReference type="Gene3D" id="3.40.50.880">
    <property type="match status" value="1"/>
</dbReference>
<dbReference type="Gene3D" id="3.40.50.300">
    <property type="entry name" value="P-loop containing nucleotide triphosphate hydrolases"/>
    <property type="match status" value="1"/>
</dbReference>
<dbReference type="HAMAP" id="MF_01227">
    <property type="entry name" value="PyrG"/>
    <property type="match status" value="1"/>
</dbReference>
<dbReference type="InterPro" id="IPR029062">
    <property type="entry name" value="Class_I_gatase-like"/>
</dbReference>
<dbReference type="InterPro" id="IPR004468">
    <property type="entry name" value="CTP_synthase"/>
</dbReference>
<dbReference type="InterPro" id="IPR017456">
    <property type="entry name" value="CTP_synthase_N"/>
</dbReference>
<dbReference type="InterPro" id="IPR017926">
    <property type="entry name" value="GATASE"/>
</dbReference>
<dbReference type="InterPro" id="IPR033828">
    <property type="entry name" value="GATase1_CTP_Synthase"/>
</dbReference>
<dbReference type="InterPro" id="IPR027417">
    <property type="entry name" value="P-loop_NTPase"/>
</dbReference>
<dbReference type="NCBIfam" id="NF003792">
    <property type="entry name" value="PRK05380.1"/>
    <property type="match status" value="1"/>
</dbReference>
<dbReference type="NCBIfam" id="TIGR00337">
    <property type="entry name" value="PyrG"/>
    <property type="match status" value="1"/>
</dbReference>
<dbReference type="PANTHER" id="PTHR11550">
    <property type="entry name" value="CTP SYNTHASE"/>
    <property type="match status" value="1"/>
</dbReference>
<dbReference type="PANTHER" id="PTHR11550:SF0">
    <property type="entry name" value="CTP SYNTHASE-RELATED"/>
    <property type="match status" value="1"/>
</dbReference>
<dbReference type="Pfam" id="PF06418">
    <property type="entry name" value="CTP_synth_N"/>
    <property type="match status" value="1"/>
</dbReference>
<dbReference type="Pfam" id="PF00117">
    <property type="entry name" value="GATase"/>
    <property type="match status" value="1"/>
</dbReference>
<dbReference type="SUPFAM" id="SSF52317">
    <property type="entry name" value="Class I glutamine amidotransferase-like"/>
    <property type="match status" value="1"/>
</dbReference>
<dbReference type="SUPFAM" id="SSF52540">
    <property type="entry name" value="P-loop containing nucleoside triphosphate hydrolases"/>
    <property type="match status" value="1"/>
</dbReference>
<dbReference type="PROSITE" id="PS51273">
    <property type="entry name" value="GATASE_TYPE_1"/>
    <property type="match status" value="1"/>
</dbReference>
<accession>A9M0Y3</accession>
<name>PYRG_NEIM0</name>
<feature type="chain" id="PRO_1000139504" description="CTP synthase">
    <location>
        <begin position="1"/>
        <end position="544"/>
    </location>
</feature>
<feature type="domain" description="Glutamine amidotransferase type-1" evidence="1">
    <location>
        <begin position="290"/>
        <end position="544"/>
    </location>
</feature>
<feature type="region of interest" description="Amidoligase domain" evidence="1">
    <location>
        <begin position="1"/>
        <end position="265"/>
    </location>
</feature>
<feature type="active site" description="Nucleophile; for glutamine hydrolysis" evidence="1">
    <location>
        <position position="380"/>
    </location>
</feature>
<feature type="active site" evidence="1">
    <location>
        <position position="517"/>
    </location>
</feature>
<feature type="active site" evidence="1">
    <location>
        <position position="519"/>
    </location>
</feature>
<feature type="binding site" evidence="1">
    <location>
        <position position="13"/>
    </location>
    <ligand>
        <name>CTP</name>
        <dbReference type="ChEBI" id="CHEBI:37563"/>
        <note>allosteric inhibitor</note>
    </ligand>
</feature>
<feature type="binding site" evidence="1">
    <location>
        <position position="13"/>
    </location>
    <ligand>
        <name>UTP</name>
        <dbReference type="ChEBI" id="CHEBI:46398"/>
    </ligand>
</feature>
<feature type="binding site" evidence="1">
    <location>
        <begin position="14"/>
        <end position="19"/>
    </location>
    <ligand>
        <name>ATP</name>
        <dbReference type="ChEBI" id="CHEBI:30616"/>
    </ligand>
</feature>
<feature type="binding site" evidence="1">
    <location>
        <position position="71"/>
    </location>
    <ligand>
        <name>ATP</name>
        <dbReference type="ChEBI" id="CHEBI:30616"/>
    </ligand>
</feature>
<feature type="binding site" evidence="1">
    <location>
        <position position="71"/>
    </location>
    <ligand>
        <name>Mg(2+)</name>
        <dbReference type="ChEBI" id="CHEBI:18420"/>
    </ligand>
</feature>
<feature type="binding site" evidence="1">
    <location>
        <position position="139"/>
    </location>
    <ligand>
        <name>Mg(2+)</name>
        <dbReference type="ChEBI" id="CHEBI:18420"/>
    </ligand>
</feature>
<feature type="binding site" evidence="1">
    <location>
        <begin position="146"/>
        <end position="148"/>
    </location>
    <ligand>
        <name>CTP</name>
        <dbReference type="ChEBI" id="CHEBI:37563"/>
        <note>allosteric inhibitor</note>
    </ligand>
</feature>
<feature type="binding site" evidence="1">
    <location>
        <begin position="186"/>
        <end position="191"/>
    </location>
    <ligand>
        <name>CTP</name>
        <dbReference type="ChEBI" id="CHEBI:37563"/>
        <note>allosteric inhibitor</note>
    </ligand>
</feature>
<feature type="binding site" evidence="1">
    <location>
        <begin position="186"/>
        <end position="191"/>
    </location>
    <ligand>
        <name>UTP</name>
        <dbReference type="ChEBI" id="CHEBI:46398"/>
    </ligand>
</feature>
<feature type="binding site" evidence="1">
    <location>
        <position position="222"/>
    </location>
    <ligand>
        <name>CTP</name>
        <dbReference type="ChEBI" id="CHEBI:37563"/>
        <note>allosteric inhibitor</note>
    </ligand>
</feature>
<feature type="binding site" evidence="1">
    <location>
        <position position="222"/>
    </location>
    <ligand>
        <name>UTP</name>
        <dbReference type="ChEBI" id="CHEBI:46398"/>
    </ligand>
</feature>
<feature type="binding site" evidence="1">
    <location>
        <position position="353"/>
    </location>
    <ligand>
        <name>L-glutamine</name>
        <dbReference type="ChEBI" id="CHEBI:58359"/>
    </ligand>
</feature>
<feature type="binding site" evidence="1">
    <location>
        <begin position="381"/>
        <end position="384"/>
    </location>
    <ligand>
        <name>L-glutamine</name>
        <dbReference type="ChEBI" id="CHEBI:58359"/>
    </ligand>
</feature>
<feature type="binding site" evidence="1">
    <location>
        <position position="404"/>
    </location>
    <ligand>
        <name>L-glutamine</name>
        <dbReference type="ChEBI" id="CHEBI:58359"/>
    </ligand>
</feature>
<feature type="binding site" evidence="1">
    <location>
        <position position="471"/>
    </location>
    <ligand>
        <name>L-glutamine</name>
        <dbReference type="ChEBI" id="CHEBI:58359"/>
    </ligand>
</feature>
<evidence type="ECO:0000255" key="1">
    <source>
        <dbReference type="HAMAP-Rule" id="MF_01227"/>
    </source>
</evidence>
<sequence>MTKFIFVTGGVVSSLGKGIAAASIAAILESRGLNVTMLKLDPYINVDPGTMSPFQHGEVFVTDDGAETDLDLGHYERFIDSTMTRRNSFSTGQVYENVIAKERRGDYLGGTVQVIPHITDEIKRRIHEGAAGYDVAIVEIGGTVGDIESLPFLEAIRQMRSQLGRNNTLFAHLSYVPYIAAAGEIKTKPTQHTVKEMLSIGLQPDILICRMDRTMPADERRKIALFCNVEERAIVGSYDVDSIYECPEMLHDQGIDNIITEQLQLNVQQADLTAWKKIVHAIQNPKHTVKIAMVGKYVDLTESYKSLIEALKHAGIHTETDVQITFVDSESIEKNNGDVSMLKDMDAILVPGGFGSRGVEGKIAAVRYARENNVPYLGICLGMQIALIEYARDVAGLKGANSTEFDLKCAAPVVALIDEWQTADGSVETRDESADLGGTMRLGAQEVELKAGSLAAKIYGSGHIRERHRHRYEVNNNYVPQLEKAGLVIGGVSAGRERLVETIELPNHPWFFACQFHPEFTSNPRKGHPLFTAFVKAALNNKKA</sequence>
<keyword id="KW-0067">ATP-binding</keyword>
<keyword id="KW-0315">Glutamine amidotransferase</keyword>
<keyword id="KW-0436">Ligase</keyword>
<keyword id="KW-0460">Magnesium</keyword>
<keyword id="KW-0479">Metal-binding</keyword>
<keyword id="KW-0547">Nucleotide-binding</keyword>
<keyword id="KW-0665">Pyrimidine biosynthesis</keyword>
<proteinExistence type="inferred from homology"/>
<organism>
    <name type="scientific">Neisseria meningitidis serogroup C (strain 053442)</name>
    <dbReference type="NCBI Taxonomy" id="374833"/>
    <lineage>
        <taxon>Bacteria</taxon>
        <taxon>Pseudomonadati</taxon>
        <taxon>Pseudomonadota</taxon>
        <taxon>Betaproteobacteria</taxon>
        <taxon>Neisseriales</taxon>
        <taxon>Neisseriaceae</taxon>
        <taxon>Neisseria</taxon>
    </lineage>
</organism>
<gene>
    <name evidence="1" type="primary">pyrG</name>
    <name type="ordered locus">NMCC_1456</name>
</gene>
<comment type="function">
    <text evidence="1">Catalyzes the ATP-dependent amination of UTP to CTP with either L-glutamine or ammonia as the source of nitrogen. Regulates intracellular CTP levels through interactions with the four ribonucleotide triphosphates.</text>
</comment>
<comment type="catalytic activity">
    <reaction evidence="1">
        <text>UTP + L-glutamine + ATP + H2O = CTP + L-glutamate + ADP + phosphate + 2 H(+)</text>
        <dbReference type="Rhea" id="RHEA:26426"/>
        <dbReference type="ChEBI" id="CHEBI:15377"/>
        <dbReference type="ChEBI" id="CHEBI:15378"/>
        <dbReference type="ChEBI" id="CHEBI:29985"/>
        <dbReference type="ChEBI" id="CHEBI:30616"/>
        <dbReference type="ChEBI" id="CHEBI:37563"/>
        <dbReference type="ChEBI" id="CHEBI:43474"/>
        <dbReference type="ChEBI" id="CHEBI:46398"/>
        <dbReference type="ChEBI" id="CHEBI:58359"/>
        <dbReference type="ChEBI" id="CHEBI:456216"/>
        <dbReference type="EC" id="6.3.4.2"/>
    </reaction>
</comment>
<comment type="catalytic activity">
    <reaction evidence="1">
        <text>L-glutamine + H2O = L-glutamate + NH4(+)</text>
        <dbReference type="Rhea" id="RHEA:15889"/>
        <dbReference type="ChEBI" id="CHEBI:15377"/>
        <dbReference type="ChEBI" id="CHEBI:28938"/>
        <dbReference type="ChEBI" id="CHEBI:29985"/>
        <dbReference type="ChEBI" id="CHEBI:58359"/>
    </reaction>
</comment>
<comment type="catalytic activity">
    <reaction evidence="1">
        <text>UTP + NH4(+) + ATP = CTP + ADP + phosphate + 2 H(+)</text>
        <dbReference type="Rhea" id="RHEA:16597"/>
        <dbReference type="ChEBI" id="CHEBI:15378"/>
        <dbReference type="ChEBI" id="CHEBI:28938"/>
        <dbReference type="ChEBI" id="CHEBI:30616"/>
        <dbReference type="ChEBI" id="CHEBI:37563"/>
        <dbReference type="ChEBI" id="CHEBI:43474"/>
        <dbReference type="ChEBI" id="CHEBI:46398"/>
        <dbReference type="ChEBI" id="CHEBI:456216"/>
    </reaction>
</comment>
<comment type="activity regulation">
    <text evidence="1">Allosterically activated by GTP, when glutamine is the substrate; GTP has no effect on the reaction when ammonia is the substrate. The allosteric effector GTP functions by stabilizing the protein conformation that binds the tetrahedral intermediate(s) formed during glutamine hydrolysis. Inhibited by the product CTP, via allosteric rather than competitive inhibition.</text>
</comment>
<comment type="pathway">
    <text evidence="1">Pyrimidine metabolism; CTP biosynthesis via de novo pathway; CTP from UDP: step 2/2.</text>
</comment>
<comment type="subunit">
    <text evidence="1">Homotetramer.</text>
</comment>
<comment type="miscellaneous">
    <text evidence="1">CTPSs have evolved a hybrid strategy for distinguishing between UTP and CTP. The overlapping regions of the product feedback inhibitory and substrate sites recognize a common feature in both compounds, the triphosphate moiety. To differentiate isosteric substrate and product pyrimidine rings, an additional pocket far from the expected kinase/ligase catalytic site, specifically recognizes the cytosine and ribose portions of the product inhibitor.</text>
</comment>
<comment type="similarity">
    <text evidence="1">Belongs to the CTP synthase family.</text>
</comment>
<protein>
    <recommendedName>
        <fullName evidence="1">CTP synthase</fullName>
        <ecNumber evidence="1">6.3.4.2</ecNumber>
    </recommendedName>
    <alternativeName>
        <fullName evidence="1">Cytidine 5'-triphosphate synthase</fullName>
    </alternativeName>
    <alternativeName>
        <fullName evidence="1">Cytidine triphosphate synthetase</fullName>
        <shortName evidence="1">CTP synthetase</shortName>
        <shortName evidence="1">CTPS</shortName>
    </alternativeName>
    <alternativeName>
        <fullName evidence="1">UTP--ammonia ligase</fullName>
    </alternativeName>
</protein>